<proteinExistence type="evidence at protein level"/>
<gene>
    <name type="primary">IDH2</name>
</gene>
<sequence>MAGYLRVVRSLCRASGSGSAWAPAALTAPNLQEQPRRHYADKRIKVAKPVVEMDGDEMTRIIWQFIKEKLILPHVDVQLKYFDLGLPNRDQTNDQVTIDSALATQKYSVAVKCATITPDEARVEEFKLKKMWKSPNGTIRNILGGTVFREPIICKNIPRLVPGWTKPITIGRHAHGDQYKATDFVVDRAGTFKVVFTPKDGSGPKEWEVYNFPAGGVGMGMYNTDESISGFAHSCFQYAIQKKWPLYMSTKNTILKAYDGRFKDIFQAIFEKHYKTEFDKHKIWYEHRLIDDMVAQVLKSSGGFVWACKNYDGDVQSDILAQGFGSLGLMTSVLVCPDGKTIEAEAAHGTVTRHYREHQKGRPTSTNPIASIFAWTRGLEHRGKLDGNQDLIRFAQTLEKVCVETVESGAMTKDLAGCIHGLSNVKLNEHFLNTSDFLDTIKSNLDRALGQQ</sequence>
<evidence type="ECO:0000250" key="1">
    <source>
        <dbReference type="UniProtKB" id="O75874"/>
    </source>
</evidence>
<evidence type="ECO:0000250" key="2">
    <source>
        <dbReference type="UniProtKB" id="P33198"/>
    </source>
</evidence>
<evidence type="ECO:0000250" key="3">
    <source>
        <dbReference type="UniProtKB" id="P48735"/>
    </source>
</evidence>
<evidence type="ECO:0000250" key="4">
    <source>
        <dbReference type="UniProtKB" id="P54071"/>
    </source>
</evidence>
<evidence type="ECO:0000269" key="5">
    <source>
    </source>
</evidence>
<evidence type="ECO:0000305" key="6"/>
<comment type="function">
    <text evidence="3">Plays a role in intermediary metabolism and energy production. It may tightly associate or interact with the pyruvate dehydrogenase complex.</text>
</comment>
<comment type="catalytic activity">
    <reaction evidence="3">
        <text>D-threo-isocitrate + NADP(+) = 2-oxoglutarate + CO2 + NADPH</text>
        <dbReference type="Rhea" id="RHEA:19629"/>
        <dbReference type="ChEBI" id="CHEBI:15562"/>
        <dbReference type="ChEBI" id="CHEBI:16526"/>
        <dbReference type="ChEBI" id="CHEBI:16810"/>
        <dbReference type="ChEBI" id="CHEBI:57783"/>
        <dbReference type="ChEBI" id="CHEBI:58349"/>
        <dbReference type="EC" id="1.1.1.42"/>
    </reaction>
</comment>
<comment type="cofactor">
    <cofactor evidence="2">
        <name>Mg(2+)</name>
        <dbReference type="ChEBI" id="CHEBI:18420"/>
    </cofactor>
    <cofactor evidence="2">
        <name>Mn(2+)</name>
        <dbReference type="ChEBI" id="CHEBI:29035"/>
    </cofactor>
    <text evidence="2">Binds 1 Mg(2+) or Mn(2+) ion per subunit.</text>
</comment>
<comment type="subunit">
    <text evidence="2">Homodimer.</text>
</comment>
<comment type="subcellular location">
    <subcellularLocation>
        <location evidence="2">Mitochondrion</location>
    </subcellularLocation>
</comment>
<comment type="PTM">
    <text evidence="3">Acetylation at Lys-413 dramatically reduces catalytic activity. Deacetylated by SIRT3 (By similarity).</text>
</comment>
<comment type="similarity">
    <text evidence="6">Belongs to the isocitrate and isopropylmalate dehydrogenases family.</text>
</comment>
<feature type="transit peptide" description="Mitochondrion" evidence="5">
    <location>
        <begin position="1"/>
        <end position="39"/>
    </location>
</feature>
<feature type="chain" id="PRO_0000014419" description="Isocitrate dehydrogenase [NADP], mitochondrial">
    <location>
        <begin position="40"/>
        <end position="452"/>
    </location>
</feature>
<feature type="binding site" evidence="1">
    <location>
        <begin position="115"/>
        <end position="117"/>
    </location>
    <ligand>
        <name>NADP(+)</name>
        <dbReference type="ChEBI" id="CHEBI:58349"/>
    </ligand>
</feature>
<feature type="binding site" evidence="2">
    <location>
        <position position="117"/>
    </location>
    <ligand>
        <name>D-threo-isocitrate</name>
        <dbReference type="ChEBI" id="CHEBI:15562"/>
    </ligand>
</feature>
<feature type="binding site" evidence="1">
    <location>
        <position position="122"/>
    </location>
    <ligand>
        <name>NADP(+)</name>
        <dbReference type="ChEBI" id="CHEBI:58349"/>
    </ligand>
</feature>
<feature type="binding site" evidence="2">
    <location>
        <begin position="134"/>
        <end position="140"/>
    </location>
    <ligand>
        <name>D-threo-isocitrate</name>
        <dbReference type="ChEBI" id="CHEBI:15562"/>
    </ligand>
</feature>
<feature type="binding site" evidence="2">
    <location>
        <position position="149"/>
    </location>
    <ligand>
        <name>D-threo-isocitrate</name>
        <dbReference type="ChEBI" id="CHEBI:15562"/>
    </ligand>
</feature>
<feature type="binding site" evidence="2">
    <location>
        <position position="172"/>
    </location>
    <ligand>
        <name>D-threo-isocitrate</name>
        <dbReference type="ChEBI" id="CHEBI:15562"/>
    </ligand>
</feature>
<feature type="binding site" evidence="2">
    <location>
        <position position="291"/>
    </location>
    <ligand>
        <name>Mn(2+)</name>
        <dbReference type="ChEBI" id="CHEBI:29035"/>
    </ligand>
</feature>
<feature type="binding site" evidence="1">
    <location>
        <position position="299"/>
    </location>
    <ligand>
        <name>NADP(+)</name>
        <dbReference type="ChEBI" id="CHEBI:58349"/>
    </ligand>
</feature>
<feature type="binding site" evidence="2">
    <location>
        <position position="314"/>
    </location>
    <ligand>
        <name>Mn(2+)</name>
        <dbReference type="ChEBI" id="CHEBI:29035"/>
    </ligand>
</feature>
<feature type="binding site" evidence="1">
    <location>
        <begin position="349"/>
        <end position="354"/>
    </location>
    <ligand>
        <name>NADP(+)</name>
        <dbReference type="ChEBI" id="CHEBI:58349"/>
    </ligand>
</feature>
<feature type="binding site" evidence="1">
    <location>
        <position position="367"/>
    </location>
    <ligand>
        <name>NADP(+)</name>
        <dbReference type="ChEBI" id="CHEBI:58349"/>
    </ligand>
</feature>
<feature type="site" description="Critical for catalysis" evidence="2">
    <location>
        <position position="179"/>
    </location>
</feature>
<feature type="site" description="Critical for catalysis" evidence="2">
    <location>
        <position position="251"/>
    </location>
</feature>
<feature type="modified residue" description="N6-acetyllysine" evidence="4">
    <location>
        <position position="45"/>
    </location>
</feature>
<feature type="modified residue" description="N6-acetyllysine" evidence="4">
    <location>
        <position position="48"/>
    </location>
</feature>
<feature type="modified residue" description="N6-acetyllysine" evidence="3">
    <location>
        <position position="67"/>
    </location>
</feature>
<feature type="modified residue" description="N6-acetyllysine" evidence="4">
    <location>
        <position position="69"/>
    </location>
</feature>
<feature type="modified residue" description="N6-acetyllysine; alternate" evidence="4">
    <location>
        <position position="80"/>
    </location>
</feature>
<feature type="modified residue" description="N6-succinyllysine; alternate" evidence="4">
    <location>
        <position position="80"/>
    </location>
</feature>
<feature type="modified residue" description="N6-acetyllysine; alternate" evidence="3">
    <location>
        <position position="106"/>
    </location>
</feature>
<feature type="modified residue" description="N6-succinyllysine; alternate" evidence="4">
    <location>
        <position position="106"/>
    </location>
</feature>
<feature type="modified residue" description="N6-acetyllysine" evidence="3">
    <location>
        <position position="155"/>
    </location>
</feature>
<feature type="modified residue" description="N6-acetyllysine; alternate" evidence="3">
    <location>
        <position position="166"/>
    </location>
</feature>
<feature type="modified residue" description="N6-succinyllysine; alternate" evidence="4">
    <location>
        <position position="166"/>
    </location>
</feature>
<feature type="modified residue" description="N6-acetyllysine; alternate" evidence="3">
    <location>
        <position position="180"/>
    </location>
</feature>
<feature type="modified residue" description="N6-succinyllysine; alternate" evidence="4">
    <location>
        <position position="180"/>
    </location>
</feature>
<feature type="modified residue" description="N6-acetyllysine; alternate" evidence="4">
    <location>
        <position position="193"/>
    </location>
</feature>
<feature type="modified residue" description="N6-succinyllysine; alternate" evidence="4">
    <location>
        <position position="193"/>
    </location>
</feature>
<feature type="modified residue" description="N6-acetyllysine" evidence="4">
    <location>
        <position position="199"/>
    </location>
</feature>
<feature type="modified residue" description="N6-acetyllysine; alternate" evidence="3">
    <location>
        <position position="256"/>
    </location>
</feature>
<feature type="modified residue" description="N6-succinyllysine; alternate" evidence="4">
    <location>
        <position position="256"/>
    </location>
</feature>
<feature type="modified residue" description="N6-acetyllysine" evidence="3">
    <location>
        <position position="263"/>
    </location>
</feature>
<feature type="modified residue" description="N6-acetyllysine" evidence="3">
    <location>
        <position position="272"/>
    </location>
</feature>
<feature type="modified residue" description="N6-acetyllysine" evidence="3">
    <location>
        <position position="275"/>
    </location>
</feature>
<feature type="modified residue" description="N6-acetyllysine" evidence="4">
    <location>
        <position position="280"/>
    </location>
</feature>
<feature type="modified residue" description="N6-acetyllysine; alternate" evidence="3">
    <location>
        <position position="282"/>
    </location>
</feature>
<feature type="modified residue" description="N6-succinyllysine; alternate" evidence="4">
    <location>
        <position position="282"/>
    </location>
</feature>
<feature type="modified residue" description="N6-acetyllysine; alternate" evidence="4">
    <location>
        <position position="384"/>
    </location>
</feature>
<feature type="modified residue" description="N6-succinyllysine; alternate" evidence="4">
    <location>
        <position position="384"/>
    </location>
</feature>
<feature type="modified residue" description="N6-acetyllysine" evidence="4">
    <location>
        <position position="400"/>
    </location>
</feature>
<feature type="modified residue" description="N6-acetyllysine" evidence="3">
    <location>
        <position position="413"/>
    </location>
</feature>
<feature type="modified residue" description="N6-acetyllysine" evidence="3">
    <location>
        <position position="442"/>
    </location>
</feature>
<feature type="sequence conflict" description="In Ref. 1; CAA49207." evidence="6" ref="1">
    <original>A</original>
    <variation>R</variation>
    <location>
        <position position="24"/>
    </location>
</feature>
<keyword id="KW-0007">Acetylation</keyword>
<keyword id="KW-0903">Direct protein sequencing</keyword>
<keyword id="KW-0329">Glyoxylate bypass</keyword>
<keyword id="KW-0460">Magnesium</keyword>
<keyword id="KW-0464">Manganese</keyword>
<keyword id="KW-0479">Metal-binding</keyword>
<keyword id="KW-0496">Mitochondrion</keyword>
<keyword id="KW-0521">NADP</keyword>
<keyword id="KW-0560">Oxidoreductase</keyword>
<keyword id="KW-1185">Reference proteome</keyword>
<keyword id="KW-0809">Transit peptide</keyword>
<keyword id="KW-0816">Tricarboxylic acid cycle</keyword>
<organism>
    <name type="scientific">Bos taurus</name>
    <name type="common">Bovine</name>
    <dbReference type="NCBI Taxonomy" id="9913"/>
    <lineage>
        <taxon>Eukaryota</taxon>
        <taxon>Metazoa</taxon>
        <taxon>Chordata</taxon>
        <taxon>Craniata</taxon>
        <taxon>Vertebrata</taxon>
        <taxon>Euteleostomi</taxon>
        <taxon>Mammalia</taxon>
        <taxon>Eutheria</taxon>
        <taxon>Laurasiatheria</taxon>
        <taxon>Artiodactyla</taxon>
        <taxon>Ruminantia</taxon>
        <taxon>Pecora</taxon>
        <taxon>Bovidae</taxon>
        <taxon>Bovinae</taxon>
        <taxon>Bos</taxon>
    </lineage>
</organism>
<name>IDHP_BOVIN</name>
<accession>Q04467</accession>
<accession>Q3ZCD4</accession>
<reference key="1">
    <citation type="journal article" date="1993" name="Biochem. J.">
        <title>Cloning of a cDNA encoding bovine mitochondrial NADP(+)-specific isocitrate dehydrogenase and structural comparison with its isoenzymes from different species.</title>
        <authorList>
            <person name="Huh T.-L."/>
            <person name="Ryu J.-H."/>
            <person name="Huh J.-W."/>
            <person name="Sung H.-C."/>
            <person name="Oh I.-U."/>
            <person name="Song B.J."/>
            <person name="Veech R.L."/>
        </authorList>
    </citation>
    <scope>NUCLEOTIDE SEQUENCE [MRNA]</scope>
    <scope>PROTEIN SEQUENCE OF 40-55</scope>
    <source>
        <tissue>Kidney</tissue>
    </source>
</reference>
<reference key="2">
    <citation type="submission" date="2005-08" db="EMBL/GenBank/DDBJ databases">
        <authorList>
            <consortium name="NIH - Mammalian Gene Collection (MGC) project"/>
        </authorList>
    </citation>
    <scope>NUCLEOTIDE SEQUENCE [LARGE SCALE MRNA]</scope>
    <source>
        <strain>Crossbred X Angus</strain>
        <tissue>Ileum</tissue>
    </source>
</reference>
<dbReference type="EC" id="1.1.1.42" evidence="3"/>
<dbReference type="EMBL" id="X69432">
    <property type="protein sequence ID" value="CAA49207.1"/>
    <property type="molecule type" value="mRNA"/>
</dbReference>
<dbReference type="EMBL" id="BC102509">
    <property type="protein sequence ID" value="AAI02510.1"/>
    <property type="molecule type" value="mRNA"/>
</dbReference>
<dbReference type="PIR" id="S33859">
    <property type="entry name" value="S33859"/>
</dbReference>
<dbReference type="RefSeq" id="NP_786984.1">
    <property type="nucleotide sequence ID" value="NM_175790.2"/>
</dbReference>
<dbReference type="SMR" id="Q04467"/>
<dbReference type="FunCoup" id="Q04467">
    <property type="interactions" value="1770"/>
</dbReference>
<dbReference type="IntAct" id="Q04467">
    <property type="interactions" value="1"/>
</dbReference>
<dbReference type="STRING" id="9913.ENSBTAP00000018741"/>
<dbReference type="GlyGen" id="Q04467">
    <property type="glycosylation" value="1 site, 1 O-linked glycan (1 site)"/>
</dbReference>
<dbReference type="SwissPalm" id="Q04467"/>
<dbReference type="PaxDb" id="9913-ENSBTAP00000018741"/>
<dbReference type="PeptideAtlas" id="Q04467"/>
<dbReference type="Ensembl" id="ENSBTAT00000018741.5">
    <property type="protein sequence ID" value="ENSBTAP00000018741.4"/>
    <property type="gene ID" value="ENSBTAG00000014093.6"/>
</dbReference>
<dbReference type="GeneID" id="327669"/>
<dbReference type="KEGG" id="bta:327669"/>
<dbReference type="CTD" id="3418"/>
<dbReference type="VEuPathDB" id="HostDB:ENSBTAG00000014093"/>
<dbReference type="VGNC" id="VGNC:53941">
    <property type="gene designation" value="IDH2"/>
</dbReference>
<dbReference type="eggNOG" id="KOG1526">
    <property type="taxonomic scope" value="Eukaryota"/>
</dbReference>
<dbReference type="GeneTree" id="ENSGT00390000012547"/>
<dbReference type="HOGENOM" id="CLU_023296_1_1_1"/>
<dbReference type="InParanoid" id="Q04467"/>
<dbReference type="OMA" id="ENYETKW"/>
<dbReference type="OrthoDB" id="248923at2759"/>
<dbReference type="TreeFam" id="TF300428"/>
<dbReference type="Reactome" id="R-BTA-2151201">
    <property type="pathway name" value="Transcriptional activation of mitochondrial biogenesis"/>
</dbReference>
<dbReference type="Reactome" id="R-BTA-71403">
    <property type="pathway name" value="Citric acid cycle (TCA cycle)"/>
</dbReference>
<dbReference type="Reactome" id="R-BTA-9837999">
    <property type="pathway name" value="Mitochondrial protein degradation"/>
</dbReference>
<dbReference type="Reactome" id="R-BTA-9854311">
    <property type="pathway name" value="Maturation of TCA enzymes and regulation of TCA cycle"/>
</dbReference>
<dbReference type="Proteomes" id="UP000009136">
    <property type="component" value="Chromosome 21"/>
</dbReference>
<dbReference type="Bgee" id="ENSBTAG00000014093">
    <property type="expression patterns" value="Expressed in cardiac ventricle and 107 other cell types or tissues"/>
</dbReference>
<dbReference type="GO" id="GO:0005829">
    <property type="term" value="C:cytosol"/>
    <property type="evidence" value="ECO:0007669"/>
    <property type="project" value="Ensembl"/>
</dbReference>
<dbReference type="GO" id="GO:0005743">
    <property type="term" value="C:mitochondrial inner membrane"/>
    <property type="evidence" value="ECO:0000250"/>
    <property type="project" value="AgBase"/>
</dbReference>
<dbReference type="GO" id="GO:0005739">
    <property type="term" value="C:mitochondrion"/>
    <property type="evidence" value="ECO:0000250"/>
    <property type="project" value="AgBase"/>
</dbReference>
<dbReference type="GO" id="GO:0005777">
    <property type="term" value="C:peroxisome"/>
    <property type="evidence" value="ECO:0007669"/>
    <property type="project" value="Ensembl"/>
</dbReference>
<dbReference type="GO" id="GO:0004450">
    <property type="term" value="F:isocitrate dehydrogenase (NADP+) activity"/>
    <property type="evidence" value="ECO:0000250"/>
    <property type="project" value="UniProtKB"/>
</dbReference>
<dbReference type="GO" id="GO:0000287">
    <property type="term" value="F:magnesium ion binding"/>
    <property type="evidence" value="ECO:0000250"/>
    <property type="project" value="UniProtKB"/>
</dbReference>
<dbReference type="GO" id="GO:0051287">
    <property type="term" value="F:NAD binding"/>
    <property type="evidence" value="ECO:0007669"/>
    <property type="project" value="InterPro"/>
</dbReference>
<dbReference type="GO" id="GO:0006103">
    <property type="term" value="P:2-oxoglutarate metabolic process"/>
    <property type="evidence" value="ECO:0000250"/>
    <property type="project" value="UniProtKB"/>
</dbReference>
<dbReference type="GO" id="GO:0006097">
    <property type="term" value="P:glyoxylate cycle"/>
    <property type="evidence" value="ECO:0007669"/>
    <property type="project" value="UniProtKB-KW"/>
</dbReference>
<dbReference type="GO" id="GO:0006102">
    <property type="term" value="P:isocitrate metabolic process"/>
    <property type="evidence" value="ECO:0000250"/>
    <property type="project" value="UniProtKB"/>
</dbReference>
<dbReference type="GO" id="GO:0006739">
    <property type="term" value="P:NADP metabolic process"/>
    <property type="evidence" value="ECO:0000318"/>
    <property type="project" value="GO_Central"/>
</dbReference>
<dbReference type="GO" id="GO:0006099">
    <property type="term" value="P:tricarboxylic acid cycle"/>
    <property type="evidence" value="ECO:0007669"/>
    <property type="project" value="UniProtKB-KW"/>
</dbReference>
<dbReference type="FunFam" id="3.40.718.10:FF:000002">
    <property type="entry name" value="Isocitrate dehydrogenase [NADP]"/>
    <property type="match status" value="1"/>
</dbReference>
<dbReference type="Gene3D" id="3.40.718.10">
    <property type="entry name" value="Isopropylmalate Dehydrogenase"/>
    <property type="match status" value="1"/>
</dbReference>
<dbReference type="InterPro" id="IPR019818">
    <property type="entry name" value="IsoCit/isopropylmalate_DH_CS"/>
</dbReference>
<dbReference type="InterPro" id="IPR004790">
    <property type="entry name" value="Isocitrate_DH_NADP"/>
</dbReference>
<dbReference type="InterPro" id="IPR024084">
    <property type="entry name" value="IsoPropMal-DH-like_dom"/>
</dbReference>
<dbReference type="NCBIfam" id="TIGR00127">
    <property type="entry name" value="nadp_idh_euk"/>
    <property type="match status" value="1"/>
</dbReference>
<dbReference type="NCBIfam" id="NF006156">
    <property type="entry name" value="PRK08299.1"/>
    <property type="match status" value="1"/>
</dbReference>
<dbReference type="PANTHER" id="PTHR11822:SF21">
    <property type="entry name" value="ISOCITRATE DEHYDROGENASE [NADP], MITOCHONDRIAL"/>
    <property type="match status" value="1"/>
</dbReference>
<dbReference type="PANTHER" id="PTHR11822">
    <property type="entry name" value="NADP-SPECIFIC ISOCITRATE DEHYDROGENASE"/>
    <property type="match status" value="1"/>
</dbReference>
<dbReference type="Pfam" id="PF00180">
    <property type="entry name" value="Iso_dh"/>
    <property type="match status" value="1"/>
</dbReference>
<dbReference type="PIRSF" id="PIRSF000108">
    <property type="entry name" value="IDH_NADP"/>
    <property type="match status" value="1"/>
</dbReference>
<dbReference type="SMART" id="SM01329">
    <property type="entry name" value="Iso_dh"/>
    <property type="match status" value="1"/>
</dbReference>
<dbReference type="SUPFAM" id="SSF53659">
    <property type="entry name" value="Isocitrate/Isopropylmalate dehydrogenase-like"/>
    <property type="match status" value="1"/>
</dbReference>
<dbReference type="PROSITE" id="PS00470">
    <property type="entry name" value="IDH_IMDH"/>
    <property type="match status" value="1"/>
</dbReference>
<protein>
    <recommendedName>
        <fullName>Isocitrate dehydrogenase [NADP], mitochondrial</fullName>
        <shortName>IDH</shortName>
        <ecNumber evidence="3">1.1.1.42</ecNumber>
    </recommendedName>
    <alternativeName>
        <fullName>ICD-M</fullName>
    </alternativeName>
    <alternativeName>
        <fullName>IDP</fullName>
    </alternativeName>
    <alternativeName>
        <fullName>NADP(+)-specific ICDH</fullName>
    </alternativeName>
    <alternativeName>
        <fullName>Oxalosuccinate decarboxylase</fullName>
    </alternativeName>
</protein>